<feature type="chain" id="PRO_0000230309" description="DNA-directed RNA polymerase I subunit RPA2">
    <location>
        <begin position="1"/>
        <end position="1136"/>
    </location>
</feature>
<feature type="zinc finger region" description="C4-type" evidence="3">
    <location>
        <begin position="1071"/>
        <end position="1102"/>
    </location>
</feature>
<feature type="region of interest" description="Disordered" evidence="4">
    <location>
        <begin position="1"/>
        <end position="24"/>
    </location>
</feature>
<feature type="region of interest" description="Loop B" evidence="3">
    <location>
        <begin position="194"/>
        <end position="208"/>
    </location>
</feature>
<feature type="region of interest" description="Loop A" evidence="3">
    <location>
        <begin position="236"/>
        <end position="247"/>
    </location>
</feature>
<feature type="region of interest" description="Fork loop 1" evidence="3">
    <location>
        <begin position="439"/>
        <end position="453"/>
    </location>
</feature>
<feature type="region of interest" description="Fork loop 2" evidence="3">
    <location>
        <begin position="474"/>
        <end position="489"/>
    </location>
</feature>
<feature type="binding site" evidence="3">
    <location>
        <position position="180"/>
    </location>
    <ligand>
        <name>RNA</name>
        <dbReference type="ChEBI" id="CHEBI:33697"/>
    </ligand>
</feature>
<feature type="binding site" evidence="3">
    <location>
        <position position="367"/>
    </location>
    <ligand>
        <name>RNA</name>
        <dbReference type="ChEBI" id="CHEBI:33697"/>
    </ligand>
</feature>
<feature type="binding site" evidence="3">
    <location>
        <position position="890"/>
    </location>
    <ligand>
        <name>RNA</name>
        <dbReference type="ChEBI" id="CHEBI:33697"/>
    </ligand>
</feature>
<feature type="binding site" evidence="3">
    <location>
        <position position="1020"/>
    </location>
    <ligand>
        <name>DNA</name>
        <dbReference type="ChEBI" id="CHEBI:16991"/>
        <label>nontemplate strand</label>
    </ligand>
</feature>
<feature type="binding site" evidence="3">
    <location>
        <position position="1036"/>
    </location>
    <ligand>
        <name>DNA</name>
        <dbReference type="ChEBI" id="CHEBI:16991"/>
        <label>template strand</label>
    </ligand>
</feature>
<feature type="binding site" evidence="3">
    <location>
        <position position="1071"/>
    </location>
    <ligand>
        <name>Zn(2+)</name>
        <dbReference type="ChEBI" id="CHEBI:29105"/>
    </ligand>
</feature>
<feature type="binding site" evidence="3">
    <location>
        <position position="1074"/>
    </location>
    <ligand>
        <name>Zn(2+)</name>
        <dbReference type="ChEBI" id="CHEBI:29105"/>
    </ligand>
</feature>
<feature type="binding site" evidence="3">
    <location>
        <position position="1099"/>
    </location>
    <ligand>
        <name>Zn(2+)</name>
        <dbReference type="ChEBI" id="CHEBI:29105"/>
    </ligand>
</feature>
<feature type="binding site" evidence="3">
    <location>
        <position position="1102"/>
    </location>
    <ligand>
        <name>Zn(2+)</name>
        <dbReference type="ChEBI" id="CHEBI:29105"/>
    </ligand>
</feature>
<feature type="site" description="Active site gating; blocks backward movement of nascent RNA" evidence="3">
    <location>
        <position position="687"/>
    </location>
</feature>
<feature type="modified residue" description="Phosphoserine" evidence="3">
    <location>
        <position position="1051"/>
    </location>
</feature>
<sequence length="1136" mass="128497">MDPGSRWRNLPSGPSLKHLTDPSYGIPREQQKAALQELTRAHVESFNYAVHEGLGLAVQAIPPFEFAFKDERISFTILDAVISPPTVPKGTICKEVSVYPAECRGRRCTYRGKLTADISWAVNGISKGIIKQFLGYVPIMVKSKLCNLYNLPPQALIEHHEEAEEMGGYFIINGIEKVIRMLIMPRRNFPIAMVRPKWKTRGPGYTHYGVSMHCVREEHSAVNMNLHYLENGTVMLNFIYRKELFFLPLGFALKALVSFSDYQIFQELIKGKEDDSFLRNSVSQMLRIVMEEGCSTQKQVLNYLGECFRVKLNVPDWYPNEQAAEFLFNQCICIHLKSNTEKFYMLCLMTRKLFALAKGECMEDNPDSLVNQEVLTPGQLFLMFLKEKLEGWLVSIKIAFDKKAQKTNVSMNTDNLMRIFTMGIDLTKPFEYLFATGNLRSKTGLGLLQDSGLCVVADKLNFIRYLSHFRCVHRGADFAKMRTTTVRRLLPESWGFLCPVHTPDGEPCGLMNHLTAVCEVVTQFVYTASIPALLCNLGVTPIDGAPHRSYSECYPVLLDGVMVGWVDKELAPGIADSLRHFKVLREKRIPPWTEVVLIPMTGKPSLYPGLFLFTTPCRLVRPVQNLELGKEELIGTMEQIFMNVAIFEDEVFAGVTTHQELFPHSLLSVIANFIPFSDHNQSPRNMYQCQMGKQTMGFPLLTYQDRSDNKLYRLQTPQSPLVRPSMYDYYDMDNYPIGTNAIVAVISYTGYDMEDAMIVNKASWERGFAHGSVYKSEFIDLSEKIKQGDSSLVFGMKPGDPRILQKLDDDGLPFIGAKLQYGDPYYSYLNLNTGESFVMYYKSKENCVVDNIKVCSNDTGSGKFKCVCITMRVPRNPTIGDKFASRHGQKGILSRLWPAEDMPFTESGMVPDILFNPHGFPSRMTIGMLIESMAGKSAALHGLCHDATPFIFSEENSALEYFGEMLKAAGYNFYGTERLYSGISGLELEADIFIGVVYYQRLRHMVSDKFQVRTTGARDRVTNQPIGGRNVQGGIRFGEMERDALLAHGTSFFLLHDRLFNCSDRSVAHVCVKCGSLLSPLLEKPPPSWSAMRNRKYNCTLCNRSDTIDTVSVPYVFRYFVAELAAMNIKVKLDVV</sequence>
<dbReference type="EC" id="2.7.7.6" evidence="3"/>
<dbReference type="EMBL" id="CR857581">
    <property type="protein sequence ID" value="CAH89859.1"/>
    <property type="molecule type" value="mRNA"/>
</dbReference>
<dbReference type="RefSeq" id="NP_001128800.1">
    <property type="nucleotide sequence ID" value="NM_001135328.1"/>
</dbReference>
<dbReference type="SMR" id="Q5REE8"/>
<dbReference type="FunCoup" id="Q5REE8">
    <property type="interactions" value="2330"/>
</dbReference>
<dbReference type="STRING" id="9601.ENSPPYP00000013566"/>
<dbReference type="GeneID" id="100171727"/>
<dbReference type="KEGG" id="pon:100171727"/>
<dbReference type="CTD" id="84172"/>
<dbReference type="eggNOG" id="KOG0216">
    <property type="taxonomic scope" value="Eukaryota"/>
</dbReference>
<dbReference type="InParanoid" id="Q5REE8"/>
<dbReference type="OrthoDB" id="10248617at2759"/>
<dbReference type="Proteomes" id="UP000001595">
    <property type="component" value="Unplaced"/>
</dbReference>
<dbReference type="GO" id="GO:0005694">
    <property type="term" value="C:chromosome"/>
    <property type="evidence" value="ECO:0000250"/>
    <property type="project" value="UniProtKB"/>
</dbReference>
<dbReference type="GO" id="GO:0000428">
    <property type="term" value="C:DNA-directed RNA polymerase complex"/>
    <property type="evidence" value="ECO:0007669"/>
    <property type="project" value="UniProtKB-KW"/>
</dbReference>
<dbReference type="GO" id="GO:0005739">
    <property type="term" value="C:mitochondrion"/>
    <property type="evidence" value="ECO:0007669"/>
    <property type="project" value="GOC"/>
</dbReference>
<dbReference type="GO" id="GO:0005730">
    <property type="term" value="C:nucleolus"/>
    <property type="evidence" value="ECO:0007669"/>
    <property type="project" value="UniProtKB-SubCell"/>
</dbReference>
<dbReference type="GO" id="GO:0003677">
    <property type="term" value="F:DNA binding"/>
    <property type="evidence" value="ECO:0007669"/>
    <property type="project" value="InterPro"/>
</dbReference>
<dbReference type="GO" id="GO:0003899">
    <property type="term" value="F:DNA-directed RNA polymerase activity"/>
    <property type="evidence" value="ECO:0000250"/>
    <property type="project" value="UniProtKB"/>
</dbReference>
<dbReference type="GO" id="GO:0032549">
    <property type="term" value="F:ribonucleoside binding"/>
    <property type="evidence" value="ECO:0007669"/>
    <property type="project" value="InterPro"/>
</dbReference>
<dbReference type="GO" id="GO:0008270">
    <property type="term" value="F:zinc ion binding"/>
    <property type="evidence" value="ECO:0007669"/>
    <property type="project" value="UniProtKB-KW"/>
</dbReference>
<dbReference type="GO" id="GO:0006351">
    <property type="term" value="P:DNA-templated transcription"/>
    <property type="evidence" value="ECO:0007669"/>
    <property type="project" value="InterPro"/>
</dbReference>
<dbReference type="GO" id="GO:0014029">
    <property type="term" value="P:neural crest formation"/>
    <property type="evidence" value="ECO:0000250"/>
    <property type="project" value="UniProtKB"/>
</dbReference>
<dbReference type="CDD" id="cd00653">
    <property type="entry name" value="RNA_pol_B_RPB2"/>
    <property type="match status" value="1"/>
</dbReference>
<dbReference type="FunFam" id="2.40.270.10:FF:000006">
    <property type="entry name" value="DNA-directed RNA polymerase subunit beta"/>
    <property type="match status" value="1"/>
</dbReference>
<dbReference type="FunFam" id="2.40.270.10:FF:000011">
    <property type="entry name" value="DNA-directed RNA polymerase subunit beta"/>
    <property type="match status" value="1"/>
</dbReference>
<dbReference type="FunFam" id="2.40.50.150:FF:000004">
    <property type="entry name" value="DNA-directed RNA polymerase subunit beta"/>
    <property type="match status" value="1"/>
</dbReference>
<dbReference type="FunFam" id="3.90.1070.20:FF:000003">
    <property type="entry name" value="DNA-directed RNA polymerase subunit beta"/>
    <property type="match status" value="1"/>
</dbReference>
<dbReference type="FunFam" id="3.90.1100.10:FF:000008">
    <property type="entry name" value="DNA-directed RNA polymerase subunit beta"/>
    <property type="match status" value="1"/>
</dbReference>
<dbReference type="FunFam" id="3.90.1100.10:FF:000016">
    <property type="entry name" value="DNA-directed RNA polymerase subunit beta"/>
    <property type="match status" value="1"/>
</dbReference>
<dbReference type="FunFam" id="3.90.1110.10:FF:000008">
    <property type="entry name" value="DNA-directed RNA polymerase subunit beta"/>
    <property type="match status" value="1"/>
</dbReference>
<dbReference type="FunFam" id="3.90.1800.10:FF:000004">
    <property type="entry name" value="DNA-directed RNA polymerase subunit beta"/>
    <property type="match status" value="1"/>
</dbReference>
<dbReference type="Gene3D" id="2.40.50.150">
    <property type="match status" value="1"/>
</dbReference>
<dbReference type="Gene3D" id="3.90.1070.20">
    <property type="match status" value="1"/>
</dbReference>
<dbReference type="Gene3D" id="3.90.1100.10">
    <property type="match status" value="1"/>
</dbReference>
<dbReference type="Gene3D" id="2.40.270.10">
    <property type="entry name" value="DNA-directed RNA polymerase, subunit 2, domain 6"/>
    <property type="match status" value="1"/>
</dbReference>
<dbReference type="Gene3D" id="3.90.1800.10">
    <property type="entry name" value="RNA polymerase alpha subunit dimerisation domain"/>
    <property type="match status" value="1"/>
</dbReference>
<dbReference type="Gene3D" id="3.90.1110.10">
    <property type="entry name" value="RNA polymerase Rpb2, domain 2"/>
    <property type="match status" value="1"/>
</dbReference>
<dbReference type="InterPro" id="IPR015712">
    <property type="entry name" value="DNA-dir_RNA_pol_su2"/>
</dbReference>
<dbReference type="InterPro" id="IPR007120">
    <property type="entry name" value="DNA-dir_RNAP_su2_dom"/>
</dbReference>
<dbReference type="InterPro" id="IPR037033">
    <property type="entry name" value="DNA-dir_RNAP_su2_hyb_sf"/>
</dbReference>
<dbReference type="InterPro" id="IPR007121">
    <property type="entry name" value="RNA_pol_bsu_CS"/>
</dbReference>
<dbReference type="InterPro" id="IPR007644">
    <property type="entry name" value="RNA_pol_bsu_protrusion"/>
</dbReference>
<dbReference type="InterPro" id="IPR007642">
    <property type="entry name" value="RNA_pol_Rpb2_2"/>
</dbReference>
<dbReference type="InterPro" id="IPR037034">
    <property type="entry name" value="RNA_pol_Rpb2_2_sf"/>
</dbReference>
<dbReference type="InterPro" id="IPR007645">
    <property type="entry name" value="RNA_pol_Rpb2_3"/>
</dbReference>
<dbReference type="InterPro" id="IPR007641">
    <property type="entry name" value="RNA_pol_Rpb2_7"/>
</dbReference>
<dbReference type="InterPro" id="IPR014724">
    <property type="entry name" value="RNA_pol_RPB2_OB-fold"/>
</dbReference>
<dbReference type="InterPro" id="IPR009674">
    <property type="entry name" value="Rpa2_dom_4"/>
</dbReference>
<dbReference type="PANTHER" id="PTHR20856">
    <property type="entry name" value="DNA-DIRECTED RNA POLYMERASE I SUBUNIT 2"/>
    <property type="match status" value="1"/>
</dbReference>
<dbReference type="Pfam" id="PF06883">
    <property type="entry name" value="RNA_pol_Rpa2_4"/>
    <property type="match status" value="1"/>
</dbReference>
<dbReference type="Pfam" id="PF04563">
    <property type="entry name" value="RNA_pol_Rpb2_1"/>
    <property type="match status" value="1"/>
</dbReference>
<dbReference type="Pfam" id="PF04561">
    <property type="entry name" value="RNA_pol_Rpb2_2"/>
    <property type="match status" value="1"/>
</dbReference>
<dbReference type="Pfam" id="PF04565">
    <property type="entry name" value="RNA_pol_Rpb2_3"/>
    <property type="match status" value="1"/>
</dbReference>
<dbReference type="Pfam" id="PF00562">
    <property type="entry name" value="RNA_pol_Rpb2_6"/>
    <property type="match status" value="1"/>
</dbReference>
<dbReference type="Pfam" id="PF04560">
    <property type="entry name" value="RNA_pol_Rpb2_7"/>
    <property type="match status" value="1"/>
</dbReference>
<dbReference type="SUPFAM" id="SSF64484">
    <property type="entry name" value="beta and beta-prime subunits of DNA dependent RNA-polymerase"/>
    <property type="match status" value="1"/>
</dbReference>
<dbReference type="PROSITE" id="PS01166">
    <property type="entry name" value="RNA_POL_BETA"/>
    <property type="match status" value="1"/>
</dbReference>
<comment type="function">
    <text evidence="1 3">Catalytic core component of RNA polymerase I (Pol I), a DNA-dependent RNA polymerase which synthesizes ribosomal RNA precursors using the four ribonucleoside triphosphates as substrates. Transcribes 47S pre-rRNAs from multicopy rRNA gene clusters, giving rise to 5.8S, 18S and 28S ribosomal RNAs (By similarity). Pol I-mediated transcription cycle proceeds through transcription initiation, transcription elongation and transcription termination stages. During transcription initiation, Pol I pre-initiation complex (PIC) is recruited by the selectivity factor 1 (SL1/TIF-IB) complex bound to the core promoter that precedes an rDNA repeat unit. The PIC assembly bends the promoter favoring the formation of the transcription bubble and promoter escape. Once the polymerase has escaped from the promoter it enters the elongation phase during which RNA is actively polymerized, based on complementarity with the template DNA strand. Highly processive, assembles in structures referred to as 'Miller trees' where many elongating Pol I complexes queue and transcribe the same rDNA coding regions. At terminator sequences downstream of the rDNA gene, PTRF interacts with Pol I and halts Pol I transcription leading to the release of the RNA transcript and polymerase from the DNA (By similarity). Forms Pol I active center together with the largest subunit POLR1A/RPA1. Appends one nucleotide at a time to the 3' end of the nascent RNA, with POLR1A/RPA1 contributing a Mg(2+)-coordinating DxDGD motif, and POLR1B/RPA2 providing lysine residues believed to facilitate Watson-Crick base pairing between the incoming nucleotide and the template base. Typically, Mg(2+) ions direct a 5' nucleoside triphosphate to form a phosphodiester bond with the 3' hydroxyl of the preceding nucleotide of the nascent RNA, with the elimination of pyrophosphate. Has proofreading activity: Pauses and backtracks to allow the cleavage of a missincorporated nucleotide via POLR1H/RPA12. High Pol I processivity is associated with decreased transcription fidelity (By similarity).</text>
</comment>
<comment type="catalytic activity">
    <reaction evidence="3">
        <text>RNA(n) + a ribonucleoside 5'-triphosphate = RNA(n+1) + diphosphate</text>
        <dbReference type="Rhea" id="RHEA:21248"/>
        <dbReference type="Rhea" id="RHEA-COMP:14527"/>
        <dbReference type="Rhea" id="RHEA-COMP:17342"/>
        <dbReference type="ChEBI" id="CHEBI:33019"/>
        <dbReference type="ChEBI" id="CHEBI:61557"/>
        <dbReference type="ChEBI" id="CHEBI:140395"/>
        <dbReference type="EC" id="2.7.7.6"/>
    </reaction>
    <physiologicalReaction direction="left-to-right" evidence="3">
        <dbReference type="Rhea" id="RHEA:21249"/>
    </physiologicalReaction>
</comment>
<comment type="subunit">
    <text evidence="3">Component of the RNA polymerase I (Pol I) complex consisting of 13 subunits: a ten-subunit catalytic core composed of POLR1A/RPA1, POLR1B/RPA2, POLR1C/RPAC1, POLR1D/RPAC2, POLR1H/RPA12, POLR2E/RPABC1, POLR2F/RPABC2, POLR2H/RPABC3, POLR2K/RPABC4 and POLR2L/RPABC5; a mobile stalk subunit POLR1F/RPA43 protruding from the core and additional subunits homologous to general transcription factors POLR1E/RPA49 and POLR1G/RPA34. Part of Pol I pre-initiation complex (PIC), in which Pol I core assembles with RRN3 and promoter-bound UTBF and SL1/TIF-IB complex.</text>
</comment>
<comment type="subcellular location">
    <subcellularLocation>
        <location evidence="3">Nucleus</location>
        <location evidence="3">Nucleolus</location>
    </subcellularLocation>
    <subcellularLocation>
        <location evidence="2">Chromosome</location>
    </subcellularLocation>
</comment>
<comment type="domain">
    <text evidence="3">The active site comprises the fork loops, the loops and the rudder that stabilize the transcription bubble and assist polymerase translocation.</text>
</comment>
<comment type="similarity">
    <text evidence="5">Belongs to the RNA polymerase beta chain family.</text>
</comment>
<proteinExistence type="evidence at transcript level"/>
<reference key="1">
    <citation type="submission" date="2004-11" db="EMBL/GenBank/DDBJ databases">
        <authorList>
            <consortium name="The German cDNA consortium"/>
        </authorList>
    </citation>
    <scope>NUCLEOTIDE SEQUENCE [LARGE SCALE MRNA]</scope>
    <source>
        <tissue>Kidney</tissue>
    </source>
</reference>
<evidence type="ECO:0000250" key="1">
    <source>
        <dbReference type="UniProtKB" id="P10964"/>
    </source>
</evidence>
<evidence type="ECO:0000250" key="2">
    <source>
        <dbReference type="UniProtKB" id="P70700"/>
    </source>
</evidence>
<evidence type="ECO:0000250" key="3">
    <source>
        <dbReference type="UniProtKB" id="Q9H9Y6"/>
    </source>
</evidence>
<evidence type="ECO:0000256" key="4">
    <source>
        <dbReference type="SAM" id="MobiDB-lite"/>
    </source>
</evidence>
<evidence type="ECO:0000305" key="5"/>
<organism>
    <name type="scientific">Pongo abelii</name>
    <name type="common">Sumatran orangutan</name>
    <name type="synonym">Pongo pygmaeus abelii</name>
    <dbReference type="NCBI Taxonomy" id="9601"/>
    <lineage>
        <taxon>Eukaryota</taxon>
        <taxon>Metazoa</taxon>
        <taxon>Chordata</taxon>
        <taxon>Craniata</taxon>
        <taxon>Vertebrata</taxon>
        <taxon>Euteleostomi</taxon>
        <taxon>Mammalia</taxon>
        <taxon>Eutheria</taxon>
        <taxon>Euarchontoglires</taxon>
        <taxon>Primates</taxon>
        <taxon>Haplorrhini</taxon>
        <taxon>Catarrhini</taxon>
        <taxon>Hominidae</taxon>
        <taxon>Pongo</taxon>
    </lineage>
</organism>
<name>RPA2_PONAB</name>
<protein>
    <recommendedName>
        <fullName>DNA-directed RNA polymerase I subunit RPA2</fullName>
        <shortName>RNA polymerase I subunit 2</shortName>
        <ecNumber evidence="3">2.7.7.6</ecNumber>
    </recommendedName>
    <alternativeName>
        <fullName>RPA135</fullName>
    </alternativeName>
</protein>
<keyword id="KW-0158">Chromosome</keyword>
<keyword id="KW-0240">DNA-directed RNA polymerase</keyword>
<keyword id="KW-0479">Metal-binding</keyword>
<keyword id="KW-0548">Nucleotidyltransferase</keyword>
<keyword id="KW-0539">Nucleus</keyword>
<keyword id="KW-0597">Phosphoprotein</keyword>
<keyword id="KW-1185">Reference proteome</keyword>
<keyword id="KW-0804">Transcription</keyword>
<keyword id="KW-0808">Transferase</keyword>
<keyword id="KW-0862">Zinc</keyword>
<keyword id="KW-0863">Zinc-finger</keyword>
<gene>
    <name type="primary">POLR1B</name>
</gene>
<accession>Q5REE8</accession>